<reference key="1">
    <citation type="journal article" date="2002" name="Mol. Microbiol.">
        <title>Genome sequence of Streptococcus agalactiae, a pathogen causing invasive neonatal disease.</title>
        <authorList>
            <person name="Glaser P."/>
            <person name="Rusniok C."/>
            <person name="Buchrieser C."/>
            <person name="Chevalier F."/>
            <person name="Frangeul L."/>
            <person name="Msadek T."/>
            <person name="Zouine M."/>
            <person name="Couve E."/>
            <person name="Lalioui L."/>
            <person name="Poyart C."/>
            <person name="Trieu-Cuot P."/>
            <person name="Kunst F."/>
        </authorList>
    </citation>
    <scope>NUCLEOTIDE SEQUENCE [LARGE SCALE GENOMIC DNA]</scope>
    <source>
        <strain>NEM316</strain>
    </source>
</reference>
<proteinExistence type="evidence at protein level"/>
<comment type="function">
    <text evidence="1">Modulates transcription in response to changes in cellular NADH/NAD(+) redox state.</text>
</comment>
<comment type="subunit">
    <text evidence="1">Homodimer.</text>
</comment>
<comment type="subcellular location">
    <subcellularLocation>
        <location evidence="1">Cytoplasm</location>
    </subcellularLocation>
</comment>
<comment type="similarity">
    <text evidence="1">Belongs to the transcriptional regulatory Rex family.</text>
</comment>
<evidence type="ECO:0000255" key="1">
    <source>
        <dbReference type="HAMAP-Rule" id="MF_01131"/>
    </source>
</evidence>
<evidence type="ECO:0007829" key="2">
    <source>
        <dbReference type="PDB" id="3KEO"/>
    </source>
</evidence>
<evidence type="ECO:0007829" key="3">
    <source>
        <dbReference type="PDB" id="3KET"/>
    </source>
</evidence>
<accession>Q8E565</accession>
<sequence length="212" mass="23821">MIMDKSIPKATAKRLSLYYRIFKRFNTDGIEKASSKQIADALGIDSATVRRDFSYFGELGRRGFGYDVKKLMNFFAEILNDHSTTNVMLVGCGNIGRALLHYRFHDRNKMQISMAFDLDSNDLVGKTTEDGIPVYGISTINDHLIDSDIETAILTVPSTEAQEVADILVKAGIKGILSFSPVHLTLPKDIIVQYVDLTSELQTLLYFMNQQR</sequence>
<organism>
    <name type="scientific">Streptococcus agalactiae serotype III (strain NEM316)</name>
    <dbReference type="NCBI Taxonomy" id="211110"/>
    <lineage>
        <taxon>Bacteria</taxon>
        <taxon>Bacillati</taxon>
        <taxon>Bacillota</taxon>
        <taxon>Bacilli</taxon>
        <taxon>Lactobacillales</taxon>
        <taxon>Streptococcaceae</taxon>
        <taxon>Streptococcus</taxon>
    </lineage>
</organism>
<keyword id="KW-0002">3D-structure</keyword>
<keyword id="KW-0963">Cytoplasm</keyword>
<keyword id="KW-0238">DNA-binding</keyword>
<keyword id="KW-0520">NAD</keyword>
<keyword id="KW-0678">Repressor</keyword>
<keyword id="KW-0804">Transcription</keyword>
<keyword id="KW-0805">Transcription regulation</keyword>
<feature type="chain" id="PRO_0000097913" description="Redox-sensing transcriptional repressor Rex">
    <location>
        <begin position="1"/>
        <end position="212"/>
    </location>
</feature>
<feature type="DNA-binding region" description="H-T-H motif" evidence="1">
    <location>
        <begin position="17"/>
        <end position="56"/>
    </location>
</feature>
<feature type="binding site" evidence="1">
    <location>
        <begin position="91"/>
        <end position="96"/>
    </location>
    <ligand>
        <name>NAD(+)</name>
        <dbReference type="ChEBI" id="CHEBI:57540"/>
    </ligand>
</feature>
<feature type="helix" evidence="2">
    <location>
        <begin position="9"/>
        <end position="12"/>
    </location>
</feature>
<feature type="helix" evidence="2">
    <location>
        <begin position="15"/>
        <end position="27"/>
    </location>
</feature>
<feature type="helix" evidence="2">
    <location>
        <begin position="35"/>
        <end position="42"/>
    </location>
</feature>
<feature type="helix" evidence="2">
    <location>
        <begin position="46"/>
        <end position="54"/>
    </location>
</feature>
<feature type="helix" evidence="2">
    <location>
        <begin position="55"/>
        <end position="59"/>
    </location>
</feature>
<feature type="turn" evidence="2">
    <location>
        <begin position="60"/>
        <end position="62"/>
    </location>
</feature>
<feature type="strand" evidence="2">
    <location>
        <begin position="63"/>
        <end position="67"/>
    </location>
</feature>
<feature type="helix" evidence="2">
    <location>
        <begin position="68"/>
        <end position="78"/>
    </location>
</feature>
<feature type="turn" evidence="2">
    <location>
        <begin position="79"/>
        <end position="82"/>
    </location>
</feature>
<feature type="strand" evidence="2">
    <location>
        <begin position="85"/>
        <end position="90"/>
    </location>
</feature>
<feature type="helix" evidence="2">
    <location>
        <begin position="94"/>
        <end position="99"/>
    </location>
</feature>
<feature type="helix" evidence="3">
    <location>
        <begin position="104"/>
        <end position="106"/>
    </location>
</feature>
<feature type="strand" evidence="2">
    <location>
        <begin position="108"/>
        <end position="117"/>
    </location>
</feature>
<feature type="turn" evidence="2">
    <location>
        <begin position="122"/>
        <end position="125"/>
    </location>
</feature>
<feature type="strand" evidence="2">
    <location>
        <begin position="133"/>
        <end position="136"/>
    </location>
</feature>
<feature type="helix" evidence="2">
    <location>
        <begin position="137"/>
        <end position="139"/>
    </location>
</feature>
<feature type="helix" evidence="2">
    <location>
        <begin position="140"/>
        <end position="143"/>
    </location>
</feature>
<feature type="strand" evidence="3">
    <location>
        <begin position="145"/>
        <end position="147"/>
    </location>
</feature>
<feature type="strand" evidence="2">
    <location>
        <begin position="151"/>
        <end position="154"/>
    </location>
</feature>
<feature type="helix" evidence="2">
    <location>
        <begin position="158"/>
        <end position="160"/>
    </location>
</feature>
<feature type="helix" evidence="2">
    <location>
        <begin position="161"/>
        <end position="171"/>
    </location>
</feature>
<feature type="strand" evidence="2">
    <location>
        <begin position="175"/>
        <end position="178"/>
    </location>
</feature>
<feature type="strand" evidence="2">
    <location>
        <begin position="180"/>
        <end position="182"/>
    </location>
</feature>
<feature type="strand" evidence="2">
    <location>
        <begin position="190"/>
        <end position="194"/>
    </location>
</feature>
<feature type="helix" evidence="2">
    <location>
        <begin position="197"/>
        <end position="211"/>
    </location>
</feature>
<protein>
    <recommendedName>
        <fullName evidence="1">Redox-sensing transcriptional repressor Rex</fullName>
    </recommendedName>
</protein>
<name>REX_STRA3</name>
<gene>
    <name evidence="1" type="primary">rex</name>
    <name type="ordered locus">gbs1167</name>
</gene>
<dbReference type="EMBL" id="AL766849">
    <property type="protein sequence ID" value="CAD46826.1"/>
    <property type="molecule type" value="Genomic_DNA"/>
</dbReference>
<dbReference type="PDB" id="3KEO">
    <property type="method" value="X-ray"/>
    <property type="resolution" value="1.50 A"/>
    <property type="chains" value="A/B=1-212"/>
</dbReference>
<dbReference type="PDB" id="3KEQ">
    <property type="method" value="X-ray"/>
    <property type="resolution" value="2.40 A"/>
    <property type="chains" value="A/B=1-212"/>
</dbReference>
<dbReference type="PDB" id="3KET">
    <property type="method" value="X-ray"/>
    <property type="resolution" value="2.40 A"/>
    <property type="chains" value="A=1-212"/>
</dbReference>
<dbReference type="PDBsum" id="3KEO"/>
<dbReference type="PDBsum" id="3KEQ"/>
<dbReference type="PDBsum" id="3KET"/>
<dbReference type="SMR" id="Q8E565"/>
<dbReference type="KEGG" id="san:gbs1167"/>
<dbReference type="eggNOG" id="COG2344">
    <property type="taxonomic scope" value="Bacteria"/>
</dbReference>
<dbReference type="HOGENOM" id="CLU_061534_1_1_9"/>
<dbReference type="EvolutionaryTrace" id="Q8E565"/>
<dbReference type="PHI-base" id="PHI:11663"/>
<dbReference type="Proteomes" id="UP000000823">
    <property type="component" value="Chromosome"/>
</dbReference>
<dbReference type="GO" id="GO:0005737">
    <property type="term" value="C:cytoplasm"/>
    <property type="evidence" value="ECO:0007669"/>
    <property type="project" value="UniProtKB-SubCell"/>
</dbReference>
<dbReference type="GO" id="GO:0003677">
    <property type="term" value="F:DNA binding"/>
    <property type="evidence" value="ECO:0007669"/>
    <property type="project" value="UniProtKB-UniRule"/>
</dbReference>
<dbReference type="GO" id="GO:0003700">
    <property type="term" value="F:DNA-binding transcription factor activity"/>
    <property type="evidence" value="ECO:0007669"/>
    <property type="project" value="UniProtKB-UniRule"/>
</dbReference>
<dbReference type="GO" id="GO:0045892">
    <property type="term" value="P:negative regulation of DNA-templated transcription"/>
    <property type="evidence" value="ECO:0007669"/>
    <property type="project" value="InterPro"/>
</dbReference>
<dbReference type="GO" id="GO:0051775">
    <property type="term" value="P:response to redox state"/>
    <property type="evidence" value="ECO:0007669"/>
    <property type="project" value="InterPro"/>
</dbReference>
<dbReference type="Gene3D" id="3.40.50.720">
    <property type="entry name" value="NAD(P)-binding Rossmann-like Domain"/>
    <property type="match status" value="1"/>
</dbReference>
<dbReference type="Gene3D" id="1.10.10.10">
    <property type="entry name" value="Winged helix-like DNA-binding domain superfamily/Winged helix DNA-binding domain"/>
    <property type="match status" value="1"/>
</dbReference>
<dbReference type="HAMAP" id="MF_01131">
    <property type="entry name" value="Rex"/>
    <property type="match status" value="1"/>
</dbReference>
<dbReference type="InterPro" id="IPR003781">
    <property type="entry name" value="CoA-bd"/>
</dbReference>
<dbReference type="InterPro" id="IPR036291">
    <property type="entry name" value="NAD(P)-bd_dom_sf"/>
</dbReference>
<dbReference type="InterPro" id="IPR009718">
    <property type="entry name" value="Rex_DNA-bd_C_dom"/>
</dbReference>
<dbReference type="InterPro" id="IPR022876">
    <property type="entry name" value="Tscrpt_rep_Rex"/>
</dbReference>
<dbReference type="InterPro" id="IPR036388">
    <property type="entry name" value="WH-like_DNA-bd_sf"/>
</dbReference>
<dbReference type="InterPro" id="IPR036390">
    <property type="entry name" value="WH_DNA-bd_sf"/>
</dbReference>
<dbReference type="NCBIfam" id="NF003988">
    <property type="entry name" value="PRK05472.1-1"/>
    <property type="match status" value="1"/>
</dbReference>
<dbReference type="NCBIfam" id="NF003989">
    <property type="entry name" value="PRK05472.1-3"/>
    <property type="match status" value="1"/>
</dbReference>
<dbReference type="NCBIfam" id="NF003991">
    <property type="entry name" value="PRK05472.1-5"/>
    <property type="match status" value="1"/>
</dbReference>
<dbReference type="NCBIfam" id="NF003994">
    <property type="entry name" value="PRK05472.2-3"/>
    <property type="match status" value="1"/>
</dbReference>
<dbReference type="NCBIfam" id="NF003995">
    <property type="entry name" value="PRK05472.2-4"/>
    <property type="match status" value="1"/>
</dbReference>
<dbReference type="NCBIfam" id="NF003996">
    <property type="entry name" value="PRK05472.2-5"/>
    <property type="match status" value="1"/>
</dbReference>
<dbReference type="PANTHER" id="PTHR35786">
    <property type="entry name" value="REDOX-SENSING TRANSCRIPTIONAL REPRESSOR REX"/>
    <property type="match status" value="1"/>
</dbReference>
<dbReference type="PANTHER" id="PTHR35786:SF1">
    <property type="entry name" value="REDOX-SENSING TRANSCRIPTIONAL REPRESSOR REX 1"/>
    <property type="match status" value="1"/>
</dbReference>
<dbReference type="Pfam" id="PF02629">
    <property type="entry name" value="CoA_binding"/>
    <property type="match status" value="1"/>
</dbReference>
<dbReference type="Pfam" id="PF06971">
    <property type="entry name" value="Put_DNA-bind_N"/>
    <property type="match status" value="1"/>
</dbReference>
<dbReference type="SMART" id="SM00881">
    <property type="entry name" value="CoA_binding"/>
    <property type="match status" value="1"/>
</dbReference>
<dbReference type="SUPFAM" id="SSF51735">
    <property type="entry name" value="NAD(P)-binding Rossmann-fold domains"/>
    <property type="match status" value="1"/>
</dbReference>
<dbReference type="SUPFAM" id="SSF46785">
    <property type="entry name" value="Winged helix' DNA-binding domain"/>
    <property type="match status" value="1"/>
</dbReference>